<organism>
    <name type="scientific">Arabidopsis thaliana</name>
    <name type="common">Mouse-ear cress</name>
    <dbReference type="NCBI Taxonomy" id="3702"/>
    <lineage>
        <taxon>Eukaryota</taxon>
        <taxon>Viridiplantae</taxon>
        <taxon>Streptophyta</taxon>
        <taxon>Embryophyta</taxon>
        <taxon>Tracheophyta</taxon>
        <taxon>Spermatophyta</taxon>
        <taxon>Magnoliopsida</taxon>
        <taxon>eudicotyledons</taxon>
        <taxon>Gunneridae</taxon>
        <taxon>Pentapetalae</taxon>
        <taxon>rosids</taxon>
        <taxon>malvids</taxon>
        <taxon>Brassicales</taxon>
        <taxon>Brassicaceae</taxon>
        <taxon>Camelineae</taxon>
        <taxon>Arabidopsis</taxon>
    </lineage>
</organism>
<keyword id="KW-0029">Amino-acid transport</keyword>
<keyword id="KW-1003">Cell membrane</keyword>
<keyword id="KW-0472">Membrane</keyword>
<keyword id="KW-1185">Reference proteome</keyword>
<keyword id="KW-0812">Transmembrane</keyword>
<keyword id="KW-1133">Transmembrane helix</keyword>
<keyword id="KW-0813">Transport</keyword>
<gene>
    <name type="ordered locus">At1g48640</name>
    <name type="ORF">F11I4.17</name>
</gene>
<feature type="chain" id="PRO_0000387971" description="Lysine histidine transporter-like 1">
    <location>
        <begin position="1"/>
        <end position="453"/>
    </location>
</feature>
<feature type="topological domain" description="Cytoplasmic" evidence="2">
    <location>
        <begin position="1"/>
        <end position="44"/>
    </location>
</feature>
<feature type="transmembrane region" description="Helical" evidence="2">
    <location>
        <begin position="45"/>
        <end position="65"/>
    </location>
</feature>
<feature type="transmembrane region" description="Helical" evidence="2">
    <location>
        <begin position="66"/>
        <end position="86"/>
    </location>
</feature>
<feature type="topological domain" description="Cytoplasmic" evidence="2">
    <location>
        <begin position="87"/>
        <end position="122"/>
    </location>
</feature>
<feature type="transmembrane region" description="Helical" evidence="2">
    <location>
        <begin position="123"/>
        <end position="143"/>
    </location>
</feature>
<feature type="topological domain" description="Extracellular" evidence="2">
    <location>
        <begin position="144"/>
        <end position="164"/>
    </location>
</feature>
<feature type="transmembrane region" description="Helical" evidence="2">
    <location>
        <begin position="165"/>
        <end position="185"/>
    </location>
</feature>
<feature type="topological domain" description="Cytoplasmic" evidence="2">
    <location>
        <begin position="186"/>
        <end position="187"/>
    </location>
</feature>
<feature type="transmembrane region" description="Helical" evidence="2">
    <location>
        <begin position="188"/>
        <end position="208"/>
    </location>
</feature>
<feature type="topological domain" description="Extracellular" evidence="2">
    <location>
        <begin position="209"/>
        <end position="231"/>
    </location>
</feature>
<feature type="transmembrane region" description="Helical" evidence="2">
    <location>
        <begin position="232"/>
        <end position="252"/>
    </location>
</feature>
<feature type="topological domain" description="Cytoplasmic" evidence="2">
    <location>
        <begin position="253"/>
        <end position="276"/>
    </location>
</feature>
<feature type="transmembrane region" description="Helical" evidence="2">
    <location>
        <begin position="277"/>
        <end position="297"/>
    </location>
</feature>
<feature type="topological domain" description="Extracellular" evidence="2">
    <location>
        <begin position="298"/>
        <end position="318"/>
    </location>
</feature>
<feature type="transmembrane region" description="Helical" evidence="2">
    <location>
        <begin position="319"/>
        <end position="339"/>
    </location>
</feature>
<feature type="topological domain" description="Cytoplasmic" evidence="2">
    <location>
        <begin position="340"/>
        <end position="359"/>
    </location>
</feature>
<feature type="transmembrane region" description="Helical" evidence="2">
    <location>
        <begin position="360"/>
        <end position="382"/>
    </location>
</feature>
<feature type="topological domain" description="Extracellular" evidence="2">
    <location>
        <begin position="383"/>
        <end position="385"/>
    </location>
</feature>
<feature type="transmembrane region" description="Helical" evidence="2">
    <location>
        <begin position="386"/>
        <end position="408"/>
    </location>
</feature>
<feature type="topological domain" description="Cytoplasmic" evidence="2">
    <location>
        <begin position="409"/>
        <end position="412"/>
    </location>
</feature>
<feature type="transmembrane region" description="Helical" evidence="2">
    <location>
        <begin position="413"/>
        <end position="433"/>
    </location>
</feature>
<feature type="topological domain" description="Extracellular" evidence="2">
    <location>
        <begin position="434"/>
        <end position="453"/>
    </location>
</feature>
<proteinExistence type="inferred from homology"/>
<protein>
    <recommendedName>
        <fullName>Lysine histidine transporter-like 1</fullName>
    </recommendedName>
</protein>
<evidence type="ECO:0000250" key="1"/>
<evidence type="ECO:0000255" key="2"/>
<evidence type="ECO:0000305" key="3"/>
<name>LHTL1_ARATH</name>
<accession>Q9C733</accession>
<sequence length="453" mass="50449">MYIQMTDGVPPPPEQSSLDHRIDELERQKEIDDWLPITSSRNAKWWYSTFHNVTAMVGAGVLGLPFFMAQLGWGPGIAVLILSWIITLYTLWQMVEMHEMVPGKRFDRYHELGQFAFGERLGLYIIVPQQIIVEVGVCIVYMVTGGQSLKKFHEIACQDCSPIRLSFFIMIFASSHFVLSHLPNFNSISGVSLVAAVMSLSYSTIAWTATAAKGVQEDVQYGYKSGTTASTVLSFFTGLGGIAFAYAGHNVVLEIQATIPSTPSNPSKGPMWRGVVVAYVVVALCYFPVALVGYGVFGNAVLDNVLMSLETPVWAIATANLFVVMHVIGSYQIFAMPVFDMVETFLVKKLNFKPSTVLRFIVRNVYVALTMFIGIMIPFFGGLLAFFGGFAFAPTSYFLPCIMWLLIYKPKRFSLSWWTNWVCIVLGVVLMILSSIGGLRQIIIQSKDYSFFS</sequence>
<comment type="function">
    <text evidence="1">Amino acid transporter.</text>
</comment>
<comment type="subcellular location">
    <subcellularLocation>
        <location evidence="3">Cell membrane</location>
        <topology evidence="3">Multi-pass membrane protein</topology>
    </subcellularLocation>
</comment>
<comment type="similarity">
    <text evidence="3">Belongs to the amino acid/polyamine transporter 2 family. Amino acid/auxin permease (AAAP) (TC 2.A.18.2) subfamily.</text>
</comment>
<comment type="sequence caution" evidence="3">
    <conflict type="erroneous gene model prediction">
        <sequence resource="EMBL-CDS" id="AAG60126"/>
    </conflict>
</comment>
<dbReference type="EMBL" id="AC073555">
    <property type="protein sequence ID" value="AAG60126.1"/>
    <property type="status" value="ALT_SEQ"/>
    <property type="molecule type" value="Genomic_DNA"/>
</dbReference>
<dbReference type="EMBL" id="CP002684">
    <property type="protein sequence ID" value="AEE32332.1"/>
    <property type="molecule type" value="Genomic_DNA"/>
</dbReference>
<dbReference type="RefSeq" id="NP_175297.2">
    <property type="nucleotide sequence ID" value="NM_103760.3"/>
</dbReference>
<dbReference type="SMR" id="Q9C733"/>
<dbReference type="FunCoup" id="Q9C733">
    <property type="interactions" value="1"/>
</dbReference>
<dbReference type="STRING" id="3702.Q9C733"/>
<dbReference type="GlyGen" id="Q9C733">
    <property type="glycosylation" value="1 site"/>
</dbReference>
<dbReference type="PaxDb" id="3702-AT1G48640.1"/>
<dbReference type="EnsemblPlants" id="AT1G48640.1">
    <property type="protein sequence ID" value="AT1G48640.1"/>
    <property type="gene ID" value="AT1G48640"/>
</dbReference>
<dbReference type="GeneID" id="841286"/>
<dbReference type="Gramene" id="AT1G48640.1">
    <property type="protein sequence ID" value="AT1G48640.1"/>
    <property type="gene ID" value="AT1G48640"/>
</dbReference>
<dbReference type="KEGG" id="ath:AT1G48640"/>
<dbReference type="Araport" id="AT1G48640"/>
<dbReference type="TAIR" id="AT1G48640"/>
<dbReference type="eggNOG" id="KOG1303">
    <property type="taxonomic scope" value="Eukaryota"/>
</dbReference>
<dbReference type="HOGENOM" id="CLU_031160_0_0_1"/>
<dbReference type="InParanoid" id="Q9C733"/>
<dbReference type="OMA" id="MTVSPIG"/>
<dbReference type="OrthoDB" id="40134at2759"/>
<dbReference type="PhylomeDB" id="Q9C733"/>
<dbReference type="PRO" id="PR:Q9C733"/>
<dbReference type="Proteomes" id="UP000006548">
    <property type="component" value="Chromosome 1"/>
</dbReference>
<dbReference type="ExpressionAtlas" id="Q9C733">
    <property type="expression patterns" value="baseline and differential"/>
</dbReference>
<dbReference type="GO" id="GO:0005886">
    <property type="term" value="C:plasma membrane"/>
    <property type="evidence" value="ECO:0007669"/>
    <property type="project" value="UniProtKB-SubCell"/>
</dbReference>
<dbReference type="GO" id="GO:0006865">
    <property type="term" value="P:amino acid transport"/>
    <property type="evidence" value="ECO:0007669"/>
    <property type="project" value="UniProtKB-KW"/>
</dbReference>
<dbReference type="FunFam" id="1.20.1740.10:FF:000033">
    <property type="entry name" value="Lysine histidine transporter 1"/>
    <property type="match status" value="1"/>
</dbReference>
<dbReference type="Gene3D" id="1.20.1740.10">
    <property type="entry name" value="Amino acid/polyamine transporter I"/>
    <property type="match status" value="1"/>
</dbReference>
<dbReference type="InterPro" id="IPR013057">
    <property type="entry name" value="AA_transpt_TM"/>
</dbReference>
<dbReference type="PANTHER" id="PTHR48017">
    <property type="entry name" value="OS05G0424000 PROTEIN-RELATED"/>
    <property type="match status" value="1"/>
</dbReference>
<dbReference type="Pfam" id="PF01490">
    <property type="entry name" value="Aa_trans"/>
    <property type="match status" value="1"/>
</dbReference>
<reference key="1">
    <citation type="journal article" date="2000" name="Nature">
        <title>Sequence and analysis of chromosome 1 of the plant Arabidopsis thaliana.</title>
        <authorList>
            <person name="Theologis A."/>
            <person name="Ecker J.R."/>
            <person name="Palm C.J."/>
            <person name="Federspiel N.A."/>
            <person name="Kaul S."/>
            <person name="White O."/>
            <person name="Alonso J."/>
            <person name="Altafi H."/>
            <person name="Araujo R."/>
            <person name="Bowman C.L."/>
            <person name="Brooks S.Y."/>
            <person name="Buehler E."/>
            <person name="Chan A."/>
            <person name="Chao Q."/>
            <person name="Chen H."/>
            <person name="Cheuk R.F."/>
            <person name="Chin C.W."/>
            <person name="Chung M.K."/>
            <person name="Conn L."/>
            <person name="Conway A.B."/>
            <person name="Conway A.R."/>
            <person name="Creasy T.H."/>
            <person name="Dewar K."/>
            <person name="Dunn P."/>
            <person name="Etgu P."/>
            <person name="Feldblyum T.V."/>
            <person name="Feng J.-D."/>
            <person name="Fong B."/>
            <person name="Fujii C.Y."/>
            <person name="Gill J.E."/>
            <person name="Goldsmith A.D."/>
            <person name="Haas B."/>
            <person name="Hansen N.F."/>
            <person name="Hughes B."/>
            <person name="Huizar L."/>
            <person name="Hunter J.L."/>
            <person name="Jenkins J."/>
            <person name="Johnson-Hopson C."/>
            <person name="Khan S."/>
            <person name="Khaykin E."/>
            <person name="Kim C.J."/>
            <person name="Koo H.L."/>
            <person name="Kremenetskaia I."/>
            <person name="Kurtz D.B."/>
            <person name="Kwan A."/>
            <person name="Lam B."/>
            <person name="Langin-Hooper S."/>
            <person name="Lee A."/>
            <person name="Lee J.M."/>
            <person name="Lenz C.A."/>
            <person name="Li J.H."/>
            <person name="Li Y.-P."/>
            <person name="Lin X."/>
            <person name="Liu S.X."/>
            <person name="Liu Z.A."/>
            <person name="Luros J.S."/>
            <person name="Maiti R."/>
            <person name="Marziali A."/>
            <person name="Militscher J."/>
            <person name="Miranda M."/>
            <person name="Nguyen M."/>
            <person name="Nierman W.C."/>
            <person name="Osborne B.I."/>
            <person name="Pai G."/>
            <person name="Peterson J."/>
            <person name="Pham P.K."/>
            <person name="Rizzo M."/>
            <person name="Rooney T."/>
            <person name="Rowley D."/>
            <person name="Sakano H."/>
            <person name="Salzberg S.L."/>
            <person name="Schwartz J.R."/>
            <person name="Shinn P."/>
            <person name="Southwick A.M."/>
            <person name="Sun H."/>
            <person name="Tallon L.J."/>
            <person name="Tambunga G."/>
            <person name="Toriumi M.J."/>
            <person name="Town C.D."/>
            <person name="Utterback T."/>
            <person name="Van Aken S."/>
            <person name="Vaysberg M."/>
            <person name="Vysotskaia V.S."/>
            <person name="Walker M."/>
            <person name="Wu D."/>
            <person name="Yu G."/>
            <person name="Fraser C.M."/>
            <person name="Venter J.C."/>
            <person name="Davis R.W."/>
        </authorList>
    </citation>
    <scope>NUCLEOTIDE SEQUENCE [LARGE SCALE GENOMIC DNA]</scope>
    <source>
        <strain>cv. Columbia</strain>
    </source>
</reference>
<reference key="2">
    <citation type="journal article" date="2017" name="Plant J.">
        <title>Araport11: a complete reannotation of the Arabidopsis thaliana reference genome.</title>
        <authorList>
            <person name="Cheng C.Y."/>
            <person name="Krishnakumar V."/>
            <person name="Chan A.P."/>
            <person name="Thibaud-Nissen F."/>
            <person name="Schobel S."/>
            <person name="Town C.D."/>
        </authorList>
    </citation>
    <scope>GENOME REANNOTATION</scope>
    <source>
        <strain>cv. Columbia</strain>
    </source>
</reference>
<reference key="3">
    <citation type="journal article" date="2004" name="Plant J.">
        <title>Selective expression of a novel high-affinity transport system for acidic and neutral amino acids in the tapetum cells of Arabidopsis flowers.</title>
        <authorList>
            <person name="Lee Y.-H."/>
            <person name="Tegeder M."/>
        </authorList>
    </citation>
    <scope>GENE FAMILY</scope>
    <source>
        <strain>cv. C24</strain>
    </source>
</reference>